<dbReference type="EMBL" id="CP000020">
    <property type="protein sequence ID" value="AAW85171.1"/>
    <property type="molecule type" value="Genomic_DNA"/>
</dbReference>
<dbReference type="RefSeq" id="WP_011261404.1">
    <property type="nucleotide sequence ID" value="NC_006840.2"/>
</dbReference>
<dbReference type="RefSeq" id="YP_204059.1">
    <property type="nucleotide sequence ID" value="NC_006840.2"/>
</dbReference>
<dbReference type="SMR" id="Q5E725"/>
<dbReference type="STRING" id="312309.VF_0676"/>
<dbReference type="EnsemblBacteria" id="AAW85171">
    <property type="protein sequence ID" value="AAW85171"/>
    <property type="gene ID" value="VF_0676"/>
</dbReference>
<dbReference type="GeneID" id="54163331"/>
<dbReference type="KEGG" id="vfi:VF_0676"/>
<dbReference type="PATRIC" id="fig|312309.11.peg.669"/>
<dbReference type="eggNOG" id="COG0829">
    <property type="taxonomic scope" value="Bacteria"/>
</dbReference>
<dbReference type="HOGENOM" id="CLU_056339_0_0_6"/>
<dbReference type="OrthoDB" id="9798842at2"/>
<dbReference type="Proteomes" id="UP000000537">
    <property type="component" value="Chromosome I"/>
</dbReference>
<dbReference type="GO" id="GO:0005737">
    <property type="term" value="C:cytoplasm"/>
    <property type="evidence" value="ECO:0007669"/>
    <property type="project" value="UniProtKB-SubCell"/>
</dbReference>
<dbReference type="GO" id="GO:0016151">
    <property type="term" value="F:nickel cation binding"/>
    <property type="evidence" value="ECO:0007669"/>
    <property type="project" value="UniProtKB-UniRule"/>
</dbReference>
<dbReference type="HAMAP" id="MF_01384">
    <property type="entry name" value="UreD"/>
    <property type="match status" value="1"/>
</dbReference>
<dbReference type="InterPro" id="IPR002669">
    <property type="entry name" value="UreD"/>
</dbReference>
<dbReference type="PANTHER" id="PTHR33643">
    <property type="entry name" value="UREASE ACCESSORY PROTEIN D"/>
    <property type="match status" value="1"/>
</dbReference>
<dbReference type="PANTHER" id="PTHR33643:SF1">
    <property type="entry name" value="UREASE ACCESSORY PROTEIN D"/>
    <property type="match status" value="1"/>
</dbReference>
<dbReference type="Pfam" id="PF01774">
    <property type="entry name" value="UreD"/>
    <property type="match status" value="1"/>
</dbReference>
<keyword id="KW-0143">Chaperone</keyword>
<keyword id="KW-0963">Cytoplasm</keyword>
<keyword id="KW-0996">Nickel insertion</keyword>
<keyword id="KW-1185">Reference proteome</keyword>
<comment type="function">
    <text evidence="1">Required for maturation of urease via the functional incorporation of the urease nickel metallocenter.</text>
</comment>
<comment type="subunit">
    <text evidence="1">UreD, UreF and UreG form a complex that acts as a GTP-hydrolysis-dependent molecular chaperone, activating the urease apoprotein by helping to assemble the nickel containing metallocenter of UreC. The UreE protein probably delivers the nickel.</text>
</comment>
<comment type="subcellular location">
    <subcellularLocation>
        <location evidence="1">Cytoplasm</location>
    </subcellularLocation>
</comment>
<comment type="similarity">
    <text evidence="1">Belongs to the UreD family.</text>
</comment>
<proteinExistence type="inferred from homology"/>
<name>URED_ALIF1</name>
<protein>
    <recommendedName>
        <fullName evidence="1">Urease accessory protein UreD</fullName>
    </recommendedName>
</protein>
<feature type="chain" id="PRO_0000340531" description="Urease accessory protein UreD">
    <location>
        <begin position="1"/>
        <end position="287"/>
    </location>
</feature>
<sequence>MPKINTSSSGWLADISLFYEKRGTNTKLVHREQVGPLMVQRPFYPETGIAHTYLLHPPGGVVGGDQLNINIHVSPQAHSLLTTPGATKFYRSSGATSSQTQNLTVESDGFLEWLPQENIFFPDSQAQLKTQVELHKNAHFIGWEMNCFGRPVLDEIFENGFVTGRTNIKVDDQLLLSESMYIDSIDEIKHAAGMRHYPMLGNLYIYPASEALEEKLRTLIDENFHEQPELFGSSNPICGITEIDGLLVIRYLGHQTEPMMACFSTLWQHTRQHWLGKLPEVPRIWAT</sequence>
<reference key="1">
    <citation type="journal article" date="2005" name="Proc. Natl. Acad. Sci. U.S.A.">
        <title>Complete genome sequence of Vibrio fischeri: a symbiotic bacterium with pathogenic congeners.</title>
        <authorList>
            <person name="Ruby E.G."/>
            <person name="Urbanowski M."/>
            <person name="Campbell J."/>
            <person name="Dunn A."/>
            <person name="Faini M."/>
            <person name="Gunsalus R."/>
            <person name="Lostroh P."/>
            <person name="Lupp C."/>
            <person name="McCann J."/>
            <person name="Millikan D."/>
            <person name="Schaefer A."/>
            <person name="Stabb E."/>
            <person name="Stevens A."/>
            <person name="Visick K."/>
            <person name="Whistler C."/>
            <person name="Greenberg E.P."/>
        </authorList>
    </citation>
    <scope>NUCLEOTIDE SEQUENCE [LARGE SCALE GENOMIC DNA]</scope>
    <source>
        <strain>ATCC 700601 / ES114</strain>
    </source>
</reference>
<accession>Q5E725</accession>
<gene>
    <name evidence="1" type="primary">ureD</name>
    <name type="ordered locus">VF_0676</name>
</gene>
<evidence type="ECO:0000255" key="1">
    <source>
        <dbReference type="HAMAP-Rule" id="MF_01384"/>
    </source>
</evidence>
<organism>
    <name type="scientific">Aliivibrio fischeri (strain ATCC 700601 / ES114)</name>
    <name type="common">Vibrio fischeri</name>
    <dbReference type="NCBI Taxonomy" id="312309"/>
    <lineage>
        <taxon>Bacteria</taxon>
        <taxon>Pseudomonadati</taxon>
        <taxon>Pseudomonadota</taxon>
        <taxon>Gammaproteobacteria</taxon>
        <taxon>Vibrionales</taxon>
        <taxon>Vibrionaceae</taxon>
        <taxon>Aliivibrio</taxon>
    </lineage>
</organism>